<sequence length="36" mass="4153">MLTLKLFVYTVVIFFVSLFVFGFLSNDPGRNPGRKE</sequence>
<geneLocation type="chloroplast"/>
<keyword id="KW-0150">Chloroplast</keyword>
<keyword id="KW-0472">Membrane</keyword>
<keyword id="KW-0602">Photosynthesis</keyword>
<keyword id="KW-0604">Photosystem II</keyword>
<keyword id="KW-0934">Plastid</keyword>
<keyword id="KW-0674">Reaction center</keyword>
<keyword id="KW-1185">Reference proteome</keyword>
<keyword id="KW-0793">Thylakoid</keyword>
<keyword id="KW-0812">Transmembrane</keyword>
<keyword id="KW-1133">Transmembrane helix</keyword>
<feature type="chain" id="PRO_0000219644" description="Photosystem II reaction center protein I">
    <location>
        <begin position="1"/>
        <end position="36"/>
    </location>
</feature>
<feature type="transmembrane region" description="Helical" evidence="1">
    <location>
        <begin position="4"/>
        <end position="24"/>
    </location>
</feature>
<accession>Q6YXN3</accession>
<evidence type="ECO:0000255" key="1">
    <source>
        <dbReference type="HAMAP-Rule" id="MF_01316"/>
    </source>
</evidence>
<evidence type="ECO:0000305" key="2"/>
<proteinExistence type="inferred from homology"/>
<name>PSBI_PHYPA</name>
<organism>
    <name type="scientific">Physcomitrium patens</name>
    <name type="common">Spreading-leaved earth moss</name>
    <name type="synonym">Physcomitrella patens</name>
    <dbReference type="NCBI Taxonomy" id="3218"/>
    <lineage>
        <taxon>Eukaryota</taxon>
        <taxon>Viridiplantae</taxon>
        <taxon>Streptophyta</taxon>
        <taxon>Embryophyta</taxon>
        <taxon>Bryophyta</taxon>
        <taxon>Bryophytina</taxon>
        <taxon>Bryopsida</taxon>
        <taxon>Funariidae</taxon>
        <taxon>Funariales</taxon>
        <taxon>Funariaceae</taxon>
        <taxon>Physcomitrium</taxon>
    </lineage>
</organism>
<protein>
    <recommendedName>
        <fullName evidence="1">Photosystem II reaction center protein I</fullName>
        <shortName evidence="1">PSII-I</shortName>
    </recommendedName>
    <alternativeName>
        <fullName evidence="1">PSII 4.8 kDa protein</fullName>
    </alternativeName>
</protein>
<comment type="function">
    <text evidence="1">One of the components of the core complex of photosystem II (PSII), required for its stability and/or assembly. PSII is a light-driven water:plastoquinone oxidoreductase that uses light energy to abstract electrons from H(2)O, generating O(2) and a proton gradient subsequently used for ATP formation. It consists of a core antenna complex that captures photons, and an electron transfer chain that converts photonic excitation into a charge separation.</text>
</comment>
<comment type="subunit">
    <text evidence="1">PSII is composed of 1 copy each of membrane proteins PsbA, PsbB, PsbC, PsbD, PsbE, PsbF, PsbH, PsbI, PsbJ, PsbK, PsbL, PsbM, PsbT, PsbX, PsbY, PsbZ, Psb30/Ycf12, at least 3 peripheral proteins of the oxygen-evolving complex and a large number of cofactors. It forms dimeric complexes.</text>
</comment>
<comment type="subcellular location">
    <subcellularLocation>
        <location evidence="1">Plastid</location>
        <location evidence="1">Chloroplast thylakoid membrane</location>
        <topology evidence="1">Single-pass membrane protein</topology>
    </subcellularLocation>
</comment>
<comment type="similarity">
    <text evidence="1">Belongs to the PsbI family.</text>
</comment>
<comment type="sequence caution" evidence="2">
    <conflict type="erroneous initiation">
        <sequence resource="EMBL-CDS" id="BAC85063"/>
    </conflict>
    <text>Extended N-terminus.</text>
</comment>
<gene>
    <name evidence="1" type="primary">psbI</name>
</gene>
<dbReference type="EMBL" id="AP005672">
    <property type="protein sequence ID" value="BAC85063.1"/>
    <property type="status" value="ALT_INIT"/>
    <property type="molecule type" value="Genomic_DNA"/>
</dbReference>
<dbReference type="RefSeq" id="NP_904213.2">
    <property type="nucleotide sequence ID" value="NC_005087.2"/>
</dbReference>
<dbReference type="RefSeq" id="YP_009477543.1">
    <property type="nucleotide sequence ID" value="NC_037465.1"/>
</dbReference>
<dbReference type="SMR" id="Q6YXN3"/>
<dbReference type="FunCoup" id="Q6YXN3">
    <property type="interactions" value="63"/>
</dbReference>
<dbReference type="STRING" id="3218.Q6YXN3"/>
<dbReference type="GeneID" id="2546798"/>
<dbReference type="GeneID" id="36487174"/>
<dbReference type="KEGG" id="ppp:2546798"/>
<dbReference type="InParanoid" id="Q6YXN3"/>
<dbReference type="Proteomes" id="UP000006727">
    <property type="component" value="Chloroplast"/>
</dbReference>
<dbReference type="GO" id="GO:0009535">
    <property type="term" value="C:chloroplast thylakoid membrane"/>
    <property type="evidence" value="ECO:0007669"/>
    <property type="project" value="UniProtKB-SubCell"/>
</dbReference>
<dbReference type="GO" id="GO:0009539">
    <property type="term" value="C:photosystem II reaction center"/>
    <property type="evidence" value="ECO:0007669"/>
    <property type="project" value="InterPro"/>
</dbReference>
<dbReference type="GO" id="GO:0015979">
    <property type="term" value="P:photosynthesis"/>
    <property type="evidence" value="ECO:0007669"/>
    <property type="project" value="UniProtKB-UniRule"/>
</dbReference>
<dbReference type="HAMAP" id="MF_01316">
    <property type="entry name" value="PSII_PsbI"/>
    <property type="match status" value="1"/>
</dbReference>
<dbReference type="InterPro" id="IPR003686">
    <property type="entry name" value="PSII_PsbI"/>
</dbReference>
<dbReference type="InterPro" id="IPR037271">
    <property type="entry name" value="PSII_PsbI_sf"/>
</dbReference>
<dbReference type="NCBIfam" id="NF002735">
    <property type="entry name" value="PRK02655.1"/>
    <property type="match status" value="1"/>
</dbReference>
<dbReference type="PANTHER" id="PTHR35772">
    <property type="entry name" value="PHOTOSYSTEM II REACTION CENTER PROTEIN I"/>
    <property type="match status" value="1"/>
</dbReference>
<dbReference type="PANTHER" id="PTHR35772:SF1">
    <property type="entry name" value="PHOTOSYSTEM II REACTION CENTER PROTEIN I"/>
    <property type="match status" value="1"/>
</dbReference>
<dbReference type="Pfam" id="PF02532">
    <property type="entry name" value="PsbI"/>
    <property type="match status" value="1"/>
</dbReference>
<dbReference type="SUPFAM" id="SSF161041">
    <property type="entry name" value="Photosystem II reaction center protein I, PsbI"/>
    <property type="match status" value="1"/>
</dbReference>
<reference key="1">
    <citation type="journal article" date="2003" name="Nucleic Acids Res.">
        <title>Complete chloroplast DNA sequence of the moss Physcomitrella patens: evidence for the loss and relocation of rpoA from the chloroplast to the nucleus.</title>
        <authorList>
            <person name="Sugiura C."/>
            <person name="Kobayashi Y."/>
            <person name="Setsuyuki A."/>
            <person name="Sugita C."/>
            <person name="Sugita M."/>
        </authorList>
    </citation>
    <scope>NUCLEOTIDE SEQUENCE [LARGE SCALE GENOMIC DNA]</scope>
    <source>
        <strain>cv. Gransden 2004</strain>
    </source>
</reference>